<name>RPE_BUCAI</name>
<organism>
    <name type="scientific">Buchnera aphidicola subsp. Acyrthosiphon pisum (strain APS)</name>
    <name type="common">Acyrthosiphon pisum symbiotic bacterium</name>
    <dbReference type="NCBI Taxonomy" id="107806"/>
    <lineage>
        <taxon>Bacteria</taxon>
        <taxon>Pseudomonadati</taxon>
        <taxon>Pseudomonadota</taxon>
        <taxon>Gammaproteobacteria</taxon>
        <taxon>Enterobacterales</taxon>
        <taxon>Erwiniaceae</taxon>
        <taxon>Buchnera</taxon>
    </lineage>
</organism>
<reference key="1">
    <citation type="journal article" date="2000" name="Nature">
        <title>Genome sequence of the endocellular bacterial symbiont of aphids Buchnera sp. APS.</title>
        <authorList>
            <person name="Shigenobu S."/>
            <person name="Watanabe H."/>
            <person name="Hattori M."/>
            <person name="Sakaki Y."/>
            <person name="Ishikawa H."/>
        </authorList>
    </citation>
    <scope>NUCLEOTIDE SEQUENCE [LARGE SCALE GENOMIC DNA]</scope>
    <source>
        <strain>APS</strain>
    </source>
</reference>
<protein>
    <recommendedName>
        <fullName evidence="1">Ribulose-phosphate 3-epimerase</fullName>
        <ecNumber evidence="1">5.1.3.1</ecNumber>
    </recommendedName>
</protein>
<keyword id="KW-0119">Carbohydrate metabolism</keyword>
<keyword id="KW-0413">Isomerase</keyword>
<keyword id="KW-0479">Metal-binding</keyword>
<keyword id="KW-1185">Reference proteome</keyword>
<gene>
    <name evidence="1" type="primary">rpe</name>
    <name type="ordered locus">BU537</name>
</gene>
<proteinExistence type="inferred from homology"/>
<feature type="chain" id="PRO_0000171562" description="Ribulose-phosphate 3-epimerase">
    <location>
        <begin position="1"/>
        <end position="228"/>
    </location>
</feature>
<feature type="active site" description="Proton acceptor" evidence="1">
    <location>
        <position position="36"/>
    </location>
</feature>
<feature type="active site" description="Proton donor" evidence="1">
    <location>
        <position position="177"/>
    </location>
</feature>
<feature type="binding site" evidence="1">
    <location>
        <position position="9"/>
    </location>
    <ligand>
        <name>substrate</name>
    </ligand>
</feature>
<feature type="binding site" evidence="1">
    <location>
        <position position="34"/>
    </location>
    <ligand>
        <name>a divalent metal cation</name>
        <dbReference type="ChEBI" id="CHEBI:60240"/>
    </ligand>
</feature>
<feature type="binding site" evidence="1">
    <location>
        <position position="36"/>
    </location>
    <ligand>
        <name>a divalent metal cation</name>
        <dbReference type="ChEBI" id="CHEBI:60240"/>
    </ligand>
</feature>
<feature type="binding site" evidence="1">
    <location>
        <position position="68"/>
    </location>
    <ligand>
        <name>a divalent metal cation</name>
        <dbReference type="ChEBI" id="CHEBI:60240"/>
    </ligand>
</feature>
<feature type="binding site" evidence="1">
    <location>
        <position position="68"/>
    </location>
    <ligand>
        <name>substrate</name>
    </ligand>
</feature>
<feature type="binding site" evidence="1">
    <location>
        <begin position="177"/>
        <end position="179"/>
    </location>
    <ligand>
        <name>substrate</name>
    </ligand>
</feature>
<feature type="binding site" evidence="1">
    <location>
        <position position="177"/>
    </location>
    <ligand>
        <name>a divalent metal cation</name>
        <dbReference type="ChEBI" id="CHEBI:60240"/>
    </ligand>
</feature>
<feature type="binding site" evidence="1">
    <location>
        <begin position="199"/>
        <end position="200"/>
    </location>
    <ligand>
        <name>substrate</name>
    </ligand>
</feature>
<comment type="function">
    <text evidence="1">Catalyzes the reversible epimerization of D-ribulose 5-phosphate to D-xylulose 5-phosphate.</text>
</comment>
<comment type="catalytic activity">
    <reaction evidence="1">
        <text>D-ribulose 5-phosphate = D-xylulose 5-phosphate</text>
        <dbReference type="Rhea" id="RHEA:13677"/>
        <dbReference type="ChEBI" id="CHEBI:57737"/>
        <dbReference type="ChEBI" id="CHEBI:58121"/>
        <dbReference type="EC" id="5.1.3.1"/>
    </reaction>
</comment>
<comment type="cofactor">
    <cofactor evidence="1">
        <name>a divalent metal cation</name>
        <dbReference type="ChEBI" id="CHEBI:60240"/>
    </cofactor>
    <text evidence="1">Binds 1 divalent metal cation per subunit.</text>
</comment>
<comment type="pathway">
    <text evidence="1">Carbohydrate degradation.</text>
</comment>
<comment type="similarity">
    <text evidence="1">Belongs to the ribulose-phosphate 3-epimerase family.</text>
</comment>
<accession>P57603</accession>
<evidence type="ECO:0000255" key="1">
    <source>
        <dbReference type="HAMAP-Rule" id="MF_02227"/>
    </source>
</evidence>
<dbReference type="EC" id="5.1.3.1" evidence="1"/>
<dbReference type="EMBL" id="BA000003">
    <property type="protein sequence ID" value="BAB13230.1"/>
    <property type="molecule type" value="Genomic_DNA"/>
</dbReference>
<dbReference type="RefSeq" id="NP_240344.1">
    <property type="nucleotide sequence ID" value="NC_002528.1"/>
</dbReference>
<dbReference type="RefSeq" id="WP_009874488.1">
    <property type="nucleotide sequence ID" value="NC_002528.1"/>
</dbReference>
<dbReference type="SMR" id="P57603"/>
<dbReference type="STRING" id="563178.BUAP5A_530"/>
<dbReference type="EnsemblBacteria" id="BAB13230">
    <property type="protein sequence ID" value="BAB13230"/>
    <property type="gene ID" value="BAB13230"/>
</dbReference>
<dbReference type="KEGG" id="buc:BU537"/>
<dbReference type="PATRIC" id="fig|107806.10.peg.542"/>
<dbReference type="eggNOG" id="COG0036">
    <property type="taxonomic scope" value="Bacteria"/>
</dbReference>
<dbReference type="HOGENOM" id="CLU_054856_1_0_6"/>
<dbReference type="Proteomes" id="UP000001806">
    <property type="component" value="Chromosome"/>
</dbReference>
<dbReference type="GO" id="GO:0004750">
    <property type="term" value="F:D-ribulose-phosphate 3-epimerase activity"/>
    <property type="evidence" value="ECO:0007669"/>
    <property type="project" value="UniProtKB-UniRule"/>
</dbReference>
<dbReference type="GO" id="GO:0046872">
    <property type="term" value="F:metal ion binding"/>
    <property type="evidence" value="ECO:0007669"/>
    <property type="project" value="UniProtKB-UniRule"/>
</dbReference>
<dbReference type="GO" id="GO:0019323">
    <property type="term" value="P:pentose catabolic process"/>
    <property type="evidence" value="ECO:0007669"/>
    <property type="project" value="UniProtKB-UniRule"/>
</dbReference>
<dbReference type="GO" id="GO:0006098">
    <property type="term" value="P:pentose-phosphate shunt"/>
    <property type="evidence" value="ECO:0007669"/>
    <property type="project" value="InterPro"/>
</dbReference>
<dbReference type="CDD" id="cd00429">
    <property type="entry name" value="RPE"/>
    <property type="match status" value="1"/>
</dbReference>
<dbReference type="FunFam" id="3.20.20.70:FF:000004">
    <property type="entry name" value="Ribulose-phosphate 3-epimerase"/>
    <property type="match status" value="1"/>
</dbReference>
<dbReference type="Gene3D" id="3.20.20.70">
    <property type="entry name" value="Aldolase class I"/>
    <property type="match status" value="1"/>
</dbReference>
<dbReference type="HAMAP" id="MF_02227">
    <property type="entry name" value="RPE"/>
    <property type="match status" value="1"/>
</dbReference>
<dbReference type="InterPro" id="IPR013785">
    <property type="entry name" value="Aldolase_TIM"/>
</dbReference>
<dbReference type="InterPro" id="IPR026019">
    <property type="entry name" value="Ribul_P_3_epim"/>
</dbReference>
<dbReference type="InterPro" id="IPR000056">
    <property type="entry name" value="Ribul_P_3_epim-like"/>
</dbReference>
<dbReference type="InterPro" id="IPR011060">
    <property type="entry name" value="RibuloseP-bd_barrel"/>
</dbReference>
<dbReference type="NCBIfam" id="NF004076">
    <property type="entry name" value="PRK05581.1-4"/>
    <property type="match status" value="1"/>
</dbReference>
<dbReference type="NCBIfam" id="TIGR01163">
    <property type="entry name" value="rpe"/>
    <property type="match status" value="1"/>
</dbReference>
<dbReference type="PANTHER" id="PTHR11749">
    <property type="entry name" value="RIBULOSE-5-PHOSPHATE-3-EPIMERASE"/>
    <property type="match status" value="1"/>
</dbReference>
<dbReference type="Pfam" id="PF00834">
    <property type="entry name" value="Ribul_P_3_epim"/>
    <property type="match status" value="1"/>
</dbReference>
<dbReference type="PIRSF" id="PIRSF001461">
    <property type="entry name" value="RPE"/>
    <property type="match status" value="1"/>
</dbReference>
<dbReference type="SUPFAM" id="SSF51366">
    <property type="entry name" value="Ribulose-phoshate binding barrel"/>
    <property type="match status" value="1"/>
</dbReference>
<dbReference type="PROSITE" id="PS01085">
    <property type="entry name" value="RIBUL_P_3_EPIMER_1"/>
    <property type="match status" value="1"/>
</dbReference>
<dbReference type="PROSITE" id="PS01086">
    <property type="entry name" value="RIBUL_P_3_EPIMER_2"/>
    <property type="match status" value="1"/>
</dbReference>
<sequence>MNKFFLAPSILSADFARLGEDIKKVIDAGSDLIHFDVMDNHYVPNLSMGPMILESLRNYNITAPIDVHLMVKPVDNLIPQFAKAGATFITFHPEATLHIERTLNLIKENGCKAGLAFNPATPLNFLDYILEKLDLILLMSVNPGFGNQSFLPSTFNKLREVRKIIDANFSDILLEVDGGVKLDNIADIACAGANVFVMGSGLFKYSNYKLVIEKIRKKLEYAHSRSIH</sequence>